<name>GRM_MICRO</name>
<keyword id="KW-0046">Antibiotic resistance</keyword>
<keyword id="KW-0489">Methyltransferase</keyword>
<keyword id="KW-0698">rRNA processing</keyword>
<keyword id="KW-0949">S-adenosyl-L-methionine</keyword>
<keyword id="KW-0808">Transferase</keyword>
<organism>
    <name type="scientific">Micromonospora rosea</name>
    <dbReference type="NCBI Taxonomy" id="1878"/>
    <lineage>
        <taxon>Bacteria</taxon>
        <taxon>Bacillati</taxon>
        <taxon>Actinomycetota</taxon>
        <taxon>Actinomycetes</taxon>
        <taxon>Micromonosporales</taxon>
        <taxon>Micromonosporaceae</taxon>
        <taxon>Micromonospora</taxon>
    </lineage>
</organism>
<protein>
    <recommendedName>
        <fullName>16S rRNA (guanine(1405)-N(7))-methyltransferase</fullName>
        <ecNumber>2.1.1.179</ecNumber>
    </recommendedName>
    <alternativeName>
        <fullName>16S rRNA m7G1405 methyltransferase</fullName>
    </alternativeName>
    <alternativeName>
        <fullName>Gentamicin-resistance methyltransferase</fullName>
    </alternativeName>
</protein>
<sequence length="274" mass="30722">MTTSTGDDRIDQLQQAITKSRRYQTVAPATVRRLARAALVASRGDVPDAVKRTKRGLHEIYGAFLPPSAPNYTALLRHLDSAVEAGDDEAVVRWDRRAMSVHMSTRERVPHLDEFYREIFRHVPRPNTLRDLACGLNPLAVPWMGLSDETVYVASDIDARLMDFVGAALTRLGVAHRTSVVDLLEARLDEPADVTLLLKTLPCLETQQRGSGWEVIDIVNSPIIVVTFPTKSLGQRSKGMFQNYSQSFESQASERSCRIQRLEIGNELIYVIHK</sequence>
<feature type="chain" id="PRO_0000083855" description="16S rRNA (guanine(1405)-N(7))-methyltransferase">
    <location>
        <begin position="1"/>
        <end position="274"/>
    </location>
</feature>
<feature type="binding site" evidence="1">
    <location>
        <position position="64"/>
    </location>
    <ligand>
        <name>S-adenosyl-L-methionine</name>
        <dbReference type="ChEBI" id="CHEBI:59789"/>
    </ligand>
</feature>
<feature type="binding site" evidence="1">
    <location>
        <begin position="102"/>
        <end position="104"/>
    </location>
    <ligand>
        <name>S-adenosyl-L-methionine</name>
        <dbReference type="ChEBI" id="CHEBI:59789"/>
    </ligand>
</feature>
<feature type="binding site" evidence="1">
    <location>
        <position position="108"/>
    </location>
    <ligand>
        <name>S-adenosyl-L-methionine</name>
        <dbReference type="ChEBI" id="CHEBI:59789"/>
    </ligand>
</feature>
<feature type="binding site" evidence="1">
    <location>
        <position position="133"/>
    </location>
    <ligand>
        <name>S-adenosyl-L-methionine</name>
        <dbReference type="ChEBI" id="CHEBI:59789"/>
    </ligand>
</feature>
<feature type="binding site" evidence="1">
    <location>
        <position position="156"/>
    </location>
    <ligand>
        <name>S-adenosyl-L-methionine</name>
        <dbReference type="ChEBI" id="CHEBI:59789"/>
    </ligand>
</feature>
<feature type="binding site" evidence="1">
    <location>
        <begin position="182"/>
        <end position="183"/>
    </location>
    <ligand>
        <name>S-adenosyl-L-methionine</name>
        <dbReference type="ChEBI" id="CHEBI:59789"/>
    </ligand>
</feature>
<feature type="binding site" evidence="1">
    <location>
        <position position="198"/>
    </location>
    <ligand>
        <name>S-adenosyl-L-methionine</name>
        <dbReference type="ChEBI" id="CHEBI:59789"/>
    </ligand>
</feature>
<feature type="binding site" evidence="1">
    <location>
        <position position="207"/>
    </location>
    <ligand>
        <name>S-adenosyl-L-methionine</name>
        <dbReference type="ChEBI" id="CHEBI:59789"/>
    </ligand>
</feature>
<gene>
    <name type="primary">grm</name>
    <name type="synonym">grmB</name>
</gene>
<accession>P24619</accession>
<reference key="1">
    <citation type="journal article" date="1991" name="Gene">
        <title>Cloning and characterization of gentamicin-resistance genes from Micromonospora purpurea and Micromonospora rosea.</title>
        <authorList>
            <person name="Kelemen G.H."/>
            <person name="Cundliffe E."/>
            <person name="Financsek I."/>
        </authorList>
    </citation>
    <scope>NUCLEOTIDE SEQUENCE [GENOMIC DNA]</scope>
    <scope>FUNCTION IN ANTIBIOTIC RESISTANCE</scope>
</reference>
<dbReference type="EC" id="2.1.1.179"/>
<dbReference type="EMBL" id="M55521">
    <property type="protein sequence ID" value="AAA25338.1"/>
    <property type="molecule type" value="Genomic_DNA"/>
</dbReference>
<dbReference type="RefSeq" id="WP_063851283.1">
    <property type="nucleotide sequence ID" value="NG_047907.1"/>
</dbReference>
<dbReference type="SMR" id="P24619"/>
<dbReference type="BRENDA" id="2.1.1.179">
    <property type="organism ID" value="13019"/>
</dbReference>
<dbReference type="GO" id="GO:0008649">
    <property type="term" value="F:rRNA methyltransferase activity"/>
    <property type="evidence" value="ECO:0007669"/>
    <property type="project" value="InterPro"/>
</dbReference>
<dbReference type="GO" id="GO:0046677">
    <property type="term" value="P:response to antibiotic"/>
    <property type="evidence" value="ECO:0007669"/>
    <property type="project" value="UniProtKB-KW"/>
</dbReference>
<dbReference type="Gene3D" id="1.10.8.10">
    <property type="entry name" value="DNA helicase RuvA subunit, C-terminal domain"/>
    <property type="match status" value="1"/>
</dbReference>
<dbReference type="Gene3D" id="3.40.50.150">
    <property type="entry name" value="Vaccinia Virus protein VP39"/>
    <property type="match status" value="1"/>
</dbReference>
<dbReference type="InterPro" id="IPR025981">
    <property type="entry name" value="rRNA_MeTrfase"/>
</dbReference>
<dbReference type="InterPro" id="IPR010769">
    <property type="entry name" value="rRNA_MeTrfase_GmN_bac"/>
</dbReference>
<dbReference type="InterPro" id="IPR029063">
    <property type="entry name" value="SAM-dependent_MTases_sf"/>
</dbReference>
<dbReference type="NCBIfam" id="NF000466">
    <property type="entry name" value="16S_rRNA_Rmt_gen"/>
    <property type="match status" value="1"/>
</dbReference>
<dbReference type="Pfam" id="PF07091">
    <property type="entry name" value="FmrO"/>
    <property type="match status" value="1"/>
</dbReference>
<dbReference type="PIRSF" id="PIRSF015852">
    <property type="entry name" value="RRNA_mtase_Grm"/>
    <property type="match status" value="1"/>
</dbReference>
<evidence type="ECO:0000250" key="1"/>
<evidence type="ECO:0000269" key="2">
    <source>
    </source>
</evidence>
<evidence type="ECO:0000305" key="3"/>
<comment type="function">
    <text evidence="1 2">Specifically methylates the N(7) position of guanine 1405 in 16S rRNA (By similarity). Confers resistance to aminoglycosides.</text>
</comment>
<comment type="catalytic activity">
    <reaction>
        <text>guanosine(1405) in 16S rRNA + S-adenosyl-L-methionine = N(7)-methylguanosine(1405) in 16S rRNA + S-adenosyl-L-homocysteine</text>
        <dbReference type="Rhea" id="RHEA:42772"/>
        <dbReference type="Rhea" id="RHEA-COMP:10225"/>
        <dbReference type="Rhea" id="RHEA-COMP:10226"/>
        <dbReference type="ChEBI" id="CHEBI:57856"/>
        <dbReference type="ChEBI" id="CHEBI:59789"/>
        <dbReference type="ChEBI" id="CHEBI:74269"/>
        <dbReference type="ChEBI" id="CHEBI:74480"/>
        <dbReference type="EC" id="2.1.1.179"/>
    </reaction>
</comment>
<comment type="miscellaneous">
    <text>Protects M.rosea, which is an antibiotic-producing bacterium, against self-intoxication.</text>
</comment>
<comment type="similarity">
    <text evidence="3">Belongs to the methyltransferase superfamily. Aminoglycoside resistance family.</text>
</comment>
<proteinExistence type="evidence at protein level"/>